<evidence type="ECO:0000255" key="1">
    <source>
        <dbReference type="HAMAP-Rule" id="MF_00671"/>
    </source>
</evidence>
<feature type="signal peptide" evidence="1">
    <location>
        <begin position="1"/>
        <end position="28"/>
    </location>
</feature>
<feature type="chain" id="PRO_5000211049" description="Tol-Pal system protein TolB" evidence="1">
    <location>
        <begin position="29"/>
        <end position="429"/>
    </location>
</feature>
<keyword id="KW-0131">Cell cycle</keyword>
<keyword id="KW-0132">Cell division</keyword>
<keyword id="KW-0574">Periplasm</keyword>
<keyword id="KW-1185">Reference proteome</keyword>
<keyword id="KW-0732">Signal</keyword>
<name>TOLB_POLNA</name>
<gene>
    <name evidence="1" type="primary">tolB</name>
    <name type="ordered locus">Pnap_2050</name>
</gene>
<dbReference type="EMBL" id="CP000529">
    <property type="protein sequence ID" value="ABM37359.1"/>
    <property type="molecule type" value="Genomic_DNA"/>
</dbReference>
<dbReference type="RefSeq" id="WP_011801439.1">
    <property type="nucleotide sequence ID" value="NC_008781.1"/>
</dbReference>
<dbReference type="SMR" id="A1VNY1"/>
<dbReference type="STRING" id="365044.Pnap_2050"/>
<dbReference type="KEGG" id="pna:Pnap_2050"/>
<dbReference type="eggNOG" id="COG0823">
    <property type="taxonomic scope" value="Bacteria"/>
</dbReference>
<dbReference type="HOGENOM" id="CLU_047123_0_0_4"/>
<dbReference type="OrthoDB" id="9802240at2"/>
<dbReference type="Proteomes" id="UP000000644">
    <property type="component" value="Chromosome"/>
</dbReference>
<dbReference type="GO" id="GO:0042597">
    <property type="term" value="C:periplasmic space"/>
    <property type="evidence" value="ECO:0007669"/>
    <property type="project" value="UniProtKB-SubCell"/>
</dbReference>
<dbReference type="GO" id="GO:0051301">
    <property type="term" value="P:cell division"/>
    <property type="evidence" value="ECO:0007669"/>
    <property type="project" value="UniProtKB-UniRule"/>
</dbReference>
<dbReference type="GO" id="GO:0017038">
    <property type="term" value="P:protein import"/>
    <property type="evidence" value="ECO:0007669"/>
    <property type="project" value="InterPro"/>
</dbReference>
<dbReference type="Gene3D" id="2.120.10.30">
    <property type="entry name" value="TolB, C-terminal domain"/>
    <property type="match status" value="1"/>
</dbReference>
<dbReference type="Gene3D" id="3.40.50.10070">
    <property type="entry name" value="TolB, N-terminal domain"/>
    <property type="match status" value="1"/>
</dbReference>
<dbReference type="HAMAP" id="MF_00671">
    <property type="entry name" value="TolB"/>
    <property type="match status" value="1"/>
</dbReference>
<dbReference type="InterPro" id="IPR011042">
    <property type="entry name" value="6-blade_b-propeller_TolB-like"/>
</dbReference>
<dbReference type="InterPro" id="IPR011659">
    <property type="entry name" value="PD40"/>
</dbReference>
<dbReference type="InterPro" id="IPR014167">
    <property type="entry name" value="Tol-Pal_TolB"/>
</dbReference>
<dbReference type="InterPro" id="IPR007195">
    <property type="entry name" value="TolB_N"/>
</dbReference>
<dbReference type="NCBIfam" id="TIGR02800">
    <property type="entry name" value="propeller_TolB"/>
    <property type="match status" value="1"/>
</dbReference>
<dbReference type="PANTHER" id="PTHR36842:SF1">
    <property type="entry name" value="PROTEIN TOLB"/>
    <property type="match status" value="1"/>
</dbReference>
<dbReference type="PANTHER" id="PTHR36842">
    <property type="entry name" value="PROTEIN TOLB HOMOLOG"/>
    <property type="match status" value="1"/>
</dbReference>
<dbReference type="Pfam" id="PF07676">
    <property type="entry name" value="PD40"/>
    <property type="match status" value="5"/>
</dbReference>
<dbReference type="Pfam" id="PF04052">
    <property type="entry name" value="TolB_N"/>
    <property type="match status" value="1"/>
</dbReference>
<dbReference type="SUPFAM" id="SSF52964">
    <property type="entry name" value="TolB, N-terminal domain"/>
    <property type="match status" value="1"/>
</dbReference>
<dbReference type="SUPFAM" id="SSF69304">
    <property type="entry name" value="Tricorn protease N-terminal domain"/>
    <property type="match status" value="1"/>
</dbReference>
<accession>A1VNY1</accession>
<protein>
    <recommendedName>
        <fullName evidence="1">Tol-Pal system protein TolB</fullName>
    </recommendedName>
</protein>
<proteinExistence type="inferred from homology"/>
<sequence length="429" mass="45844">MSITPSFSRRSVVSLLAAGAFSSMSAFAQFRVEVSGVGMTQLPIAIAPFRGEAQSPQKIGSIVKADLERSGMFRGVDAGGVVADENTRPDLASWRQKGADAMVTGSVSPLADGRFDVRLRLWDVVREQDLGGQSYTVTKSDLRLSAHRVSDFVYEKLTGEKGIFSTRIAYVTKAGQRYTLWVADSDGESAQSALASPEPIISPAWSPSGAQLAYVSFESRKPVIYSHDVATGKRRLLANFRGSNSAPAWSPDGSQLVATLSQAGGSQIYSIGLNGGDPKRLTQSSSIDTEPAFSPDGRLIYFVSDRGGSPQIYRMSPAGGNAERVTFTGSYNISPVVSPDGRWLAYVSRVGGGFKLHVMELSTGTVTSITDTSADESPSFAPNSRLIVYATQQQGKEALMTTTLDGKIKARLSGAGGDIREPDWGPFQR</sequence>
<reference key="1">
    <citation type="journal article" date="2009" name="Environ. Microbiol.">
        <title>The genome of Polaromonas naphthalenivorans strain CJ2, isolated from coal tar-contaminated sediment, reveals physiological and metabolic versatility and evolution through extensive horizontal gene transfer.</title>
        <authorList>
            <person name="Yagi J.M."/>
            <person name="Sims D."/>
            <person name="Brettin T."/>
            <person name="Bruce D."/>
            <person name="Madsen E.L."/>
        </authorList>
    </citation>
    <scope>NUCLEOTIDE SEQUENCE [LARGE SCALE GENOMIC DNA]</scope>
    <source>
        <strain>CJ2</strain>
    </source>
</reference>
<organism>
    <name type="scientific">Polaromonas naphthalenivorans (strain CJ2)</name>
    <dbReference type="NCBI Taxonomy" id="365044"/>
    <lineage>
        <taxon>Bacteria</taxon>
        <taxon>Pseudomonadati</taxon>
        <taxon>Pseudomonadota</taxon>
        <taxon>Betaproteobacteria</taxon>
        <taxon>Burkholderiales</taxon>
        <taxon>Comamonadaceae</taxon>
        <taxon>Polaromonas</taxon>
    </lineage>
</organism>
<comment type="function">
    <text evidence="1">Part of the Tol-Pal system, which plays a role in outer membrane invagination during cell division and is important for maintaining outer membrane integrity.</text>
</comment>
<comment type="subunit">
    <text evidence="1">The Tol-Pal system is composed of five core proteins: the inner membrane proteins TolA, TolQ and TolR, the periplasmic protein TolB and the outer membrane protein Pal. They form a network linking the inner and outer membranes and the peptidoglycan layer.</text>
</comment>
<comment type="subcellular location">
    <subcellularLocation>
        <location evidence="1">Periplasm</location>
    </subcellularLocation>
</comment>
<comment type="similarity">
    <text evidence="1">Belongs to the TolB family.</text>
</comment>